<reference key="1">
    <citation type="journal article" date="2002" name="Nature">
        <title>The genome sequence of Schizosaccharomyces pombe.</title>
        <authorList>
            <person name="Wood V."/>
            <person name="Gwilliam R."/>
            <person name="Rajandream M.A."/>
            <person name="Lyne M.H."/>
            <person name="Lyne R."/>
            <person name="Stewart A."/>
            <person name="Sgouros J.G."/>
            <person name="Peat N."/>
            <person name="Hayles J."/>
            <person name="Baker S.G."/>
            <person name="Basham D."/>
            <person name="Bowman S."/>
            <person name="Brooks K."/>
            <person name="Brown D."/>
            <person name="Brown S."/>
            <person name="Chillingworth T."/>
            <person name="Churcher C.M."/>
            <person name="Collins M."/>
            <person name="Connor R."/>
            <person name="Cronin A."/>
            <person name="Davis P."/>
            <person name="Feltwell T."/>
            <person name="Fraser A."/>
            <person name="Gentles S."/>
            <person name="Goble A."/>
            <person name="Hamlin N."/>
            <person name="Harris D.E."/>
            <person name="Hidalgo J."/>
            <person name="Hodgson G."/>
            <person name="Holroyd S."/>
            <person name="Hornsby T."/>
            <person name="Howarth S."/>
            <person name="Huckle E.J."/>
            <person name="Hunt S."/>
            <person name="Jagels K."/>
            <person name="James K.D."/>
            <person name="Jones L."/>
            <person name="Jones M."/>
            <person name="Leather S."/>
            <person name="McDonald S."/>
            <person name="McLean J."/>
            <person name="Mooney P."/>
            <person name="Moule S."/>
            <person name="Mungall K.L."/>
            <person name="Murphy L.D."/>
            <person name="Niblett D."/>
            <person name="Odell C."/>
            <person name="Oliver K."/>
            <person name="O'Neil S."/>
            <person name="Pearson D."/>
            <person name="Quail M.A."/>
            <person name="Rabbinowitsch E."/>
            <person name="Rutherford K.M."/>
            <person name="Rutter S."/>
            <person name="Saunders D."/>
            <person name="Seeger K."/>
            <person name="Sharp S."/>
            <person name="Skelton J."/>
            <person name="Simmonds M.N."/>
            <person name="Squares R."/>
            <person name="Squares S."/>
            <person name="Stevens K."/>
            <person name="Taylor K."/>
            <person name="Taylor R.G."/>
            <person name="Tivey A."/>
            <person name="Walsh S.V."/>
            <person name="Warren T."/>
            <person name="Whitehead S."/>
            <person name="Woodward J.R."/>
            <person name="Volckaert G."/>
            <person name="Aert R."/>
            <person name="Robben J."/>
            <person name="Grymonprez B."/>
            <person name="Weltjens I."/>
            <person name="Vanstreels E."/>
            <person name="Rieger M."/>
            <person name="Schaefer M."/>
            <person name="Mueller-Auer S."/>
            <person name="Gabel C."/>
            <person name="Fuchs M."/>
            <person name="Duesterhoeft A."/>
            <person name="Fritzc C."/>
            <person name="Holzer E."/>
            <person name="Moestl D."/>
            <person name="Hilbert H."/>
            <person name="Borzym K."/>
            <person name="Langer I."/>
            <person name="Beck A."/>
            <person name="Lehrach H."/>
            <person name="Reinhardt R."/>
            <person name="Pohl T.M."/>
            <person name="Eger P."/>
            <person name="Zimmermann W."/>
            <person name="Wedler H."/>
            <person name="Wambutt R."/>
            <person name="Purnelle B."/>
            <person name="Goffeau A."/>
            <person name="Cadieu E."/>
            <person name="Dreano S."/>
            <person name="Gloux S."/>
            <person name="Lelaure V."/>
            <person name="Mottier S."/>
            <person name="Galibert F."/>
            <person name="Aves S.J."/>
            <person name="Xiang Z."/>
            <person name="Hunt C."/>
            <person name="Moore K."/>
            <person name="Hurst S.M."/>
            <person name="Lucas M."/>
            <person name="Rochet M."/>
            <person name="Gaillardin C."/>
            <person name="Tallada V.A."/>
            <person name="Garzon A."/>
            <person name="Thode G."/>
            <person name="Daga R.R."/>
            <person name="Cruzado L."/>
            <person name="Jimenez J."/>
            <person name="Sanchez M."/>
            <person name="del Rey F."/>
            <person name="Benito J."/>
            <person name="Dominguez A."/>
            <person name="Revuelta J.L."/>
            <person name="Moreno S."/>
            <person name="Armstrong J."/>
            <person name="Forsburg S.L."/>
            <person name="Cerutti L."/>
            <person name="Lowe T."/>
            <person name="McCombie W.R."/>
            <person name="Paulsen I."/>
            <person name="Potashkin J."/>
            <person name="Shpakovski G.V."/>
            <person name="Ussery D."/>
            <person name="Barrell B.G."/>
            <person name="Nurse P."/>
        </authorList>
    </citation>
    <scope>NUCLEOTIDE SEQUENCE [LARGE SCALE GENOMIC DNA]</scope>
    <source>
        <strain>972 / ATCC 24843</strain>
    </source>
</reference>
<reference key="2">
    <citation type="journal article" date="2011" name="Science">
        <title>Comparative functional genomics of the fission yeasts.</title>
        <authorList>
            <person name="Rhind N."/>
            <person name="Chen Z."/>
            <person name="Yassour M."/>
            <person name="Thompson D.A."/>
            <person name="Haas B.J."/>
            <person name="Habib N."/>
            <person name="Wapinski I."/>
            <person name="Roy S."/>
            <person name="Lin M.F."/>
            <person name="Heiman D.I."/>
            <person name="Young S.K."/>
            <person name="Furuya K."/>
            <person name="Guo Y."/>
            <person name="Pidoux A."/>
            <person name="Chen H.M."/>
            <person name="Robbertse B."/>
            <person name="Goldberg J.M."/>
            <person name="Aoki K."/>
            <person name="Bayne E.H."/>
            <person name="Berlin A.M."/>
            <person name="Desjardins C.A."/>
            <person name="Dobbs E."/>
            <person name="Dukaj L."/>
            <person name="Fan L."/>
            <person name="FitzGerald M.G."/>
            <person name="French C."/>
            <person name="Gujja S."/>
            <person name="Hansen K."/>
            <person name="Keifenheim D."/>
            <person name="Levin J.Z."/>
            <person name="Mosher R.A."/>
            <person name="Mueller C.A."/>
            <person name="Pfiffner J."/>
            <person name="Priest M."/>
            <person name="Russ C."/>
            <person name="Smialowska A."/>
            <person name="Swoboda P."/>
            <person name="Sykes S.M."/>
            <person name="Vaughn M."/>
            <person name="Vengrova S."/>
            <person name="Yoder R."/>
            <person name="Zeng Q."/>
            <person name="Allshire R."/>
            <person name="Baulcombe D."/>
            <person name="Birren B.W."/>
            <person name="Brown W."/>
            <person name="Ekwall K."/>
            <person name="Kellis M."/>
            <person name="Leatherwood J."/>
            <person name="Levin H."/>
            <person name="Margalit H."/>
            <person name="Martienssen R."/>
            <person name="Nieduszynski C.A."/>
            <person name="Spatafora J.W."/>
            <person name="Friedman N."/>
            <person name="Dalgaard J.Z."/>
            <person name="Baumann P."/>
            <person name="Niki H."/>
            <person name="Regev A."/>
            <person name="Nusbaum C."/>
        </authorList>
    </citation>
    <scope>REVISION OF GENE MODEL</scope>
</reference>
<reference key="3">
    <citation type="journal article" date="2006" name="Nat. Biotechnol.">
        <title>ORFeome cloning and global analysis of protein localization in the fission yeast Schizosaccharomyces pombe.</title>
        <authorList>
            <person name="Matsuyama A."/>
            <person name="Arai R."/>
            <person name="Yashiroda Y."/>
            <person name="Shirai A."/>
            <person name="Kamata A."/>
            <person name="Sekido S."/>
            <person name="Kobayashi Y."/>
            <person name="Hashimoto A."/>
            <person name="Hamamoto M."/>
            <person name="Hiraoka Y."/>
            <person name="Horinouchi S."/>
            <person name="Yoshida M."/>
        </authorList>
    </citation>
    <scope>SUBCELLULAR LOCATION [LARGE SCALE ANALYSIS]</scope>
</reference>
<gene>
    <name evidence="1" type="primary">gpc1</name>
    <name type="ORF">SPBC776.05</name>
</gene>
<organism>
    <name type="scientific">Schizosaccharomyces pombe (strain 972 / ATCC 24843)</name>
    <name type="common">Fission yeast</name>
    <dbReference type="NCBI Taxonomy" id="284812"/>
    <lineage>
        <taxon>Eukaryota</taxon>
        <taxon>Fungi</taxon>
        <taxon>Dikarya</taxon>
        <taxon>Ascomycota</taxon>
        <taxon>Taphrinomycotina</taxon>
        <taxon>Schizosaccharomycetes</taxon>
        <taxon>Schizosaccharomycetales</taxon>
        <taxon>Schizosaccharomycetaceae</taxon>
        <taxon>Schizosaccharomyces</taxon>
    </lineage>
</organism>
<accession>O94673</accession>
<name>GPC1_SCHPO</name>
<protein>
    <recommendedName>
        <fullName evidence="1">Glycerophosphocholine acyltransferase 1</fullName>
        <shortName evidence="1">GPCAT</shortName>
        <ecNumber evidence="1">2.3.1.-</ecNumber>
    </recommendedName>
</protein>
<comment type="function">
    <text evidence="1">Glycerophosphocholine acyltransferase (GPCAT) that utilizes acyl-CoA to acylate glycero-3-phosphocholine (GPC), forming lysophosphatidylcholine (LPC) (By similarity). Shows broad acyl specificities with a preference for 16:0-CoA, polyunsaturated acyl-CoA, and the hydroxylated ricinoleoyl-CoA (By similarity). Also catalyzes the acylation of glycero-3-phosphoethanolamine (GPE) with acyl-CoA (By similarity). In addition to acyl-CoA, GPCAT efficiently utilizes LPC and lysophosphatidylethanolamine (LPE) as acyl donors in the acylation of GPC (By similarity). Contributes to the maintenance of phosphatidylcholine (PC) homeostasis and might also have specific functions in acyl editing of PC, such as transferring acyl groups modified at the sn-2 position of PC to the sn-1 (By similarity).</text>
</comment>
<comment type="catalytic activity">
    <reaction evidence="1">
        <text>sn-glycerol 3-phosphocholine + an acyl-CoA = a 1-acyl-sn-glycero-3-phosphocholine + CoA</text>
        <dbReference type="Rhea" id="RHEA:58476"/>
        <dbReference type="ChEBI" id="CHEBI:16870"/>
        <dbReference type="ChEBI" id="CHEBI:57287"/>
        <dbReference type="ChEBI" id="CHEBI:58168"/>
        <dbReference type="ChEBI" id="CHEBI:58342"/>
    </reaction>
</comment>
<comment type="catalytic activity">
    <reaction evidence="1">
        <text>sn-glycero-3-phosphoethanolamine + an acyl-CoA = a monoacyl-sn-glycero-3-phosphoethanolamine + CoA</text>
        <dbReference type="Rhea" id="RHEA:62108"/>
        <dbReference type="ChEBI" id="CHEBI:57287"/>
        <dbReference type="ChEBI" id="CHEBI:58342"/>
        <dbReference type="ChEBI" id="CHEBI:67274"/>
        <dbReference type="ChEBI" id="CHEBI:143890"/>
    </reaction>
</comment>
<comment type="catalytic activity">
    <reaction evidence="1">
        <text>sn-glycero-3-phosphoethanolamine + (9Z)-octadecenoyl-CoA = (9Z-octadecenoyl)-sn-glycero-3-phosphoethanolamine + CoA</text>
        <dbReference type="Rhea" id="RHEA:62104"/>
        <dbReference type="ChEBI" id="CHEBI:57287"/>
        <dbReference type="ChEBI" id="CHEBI:57387"/>
        <dbReference type="ChEBI" id="CHEBI:143890"/>
        <dbReference type="ChEBI" id="CHEBI:145434"/>
    </reaction>
</comment>
<comment type="subcellular location">
    <subcellularLocation>
        <location evidence="4">Endoplasmic reticulum membrane</location>
        <topology evidence="2">Multi-pass membrane protein</topology>
    </subcellularLocation>
    <subcellularLocation>
        <location evidence="4">Golgi apparatus membrane</location>
        <topology evidence="2">Multi-pass membrane protein</topology>
    </subcellularLocation>
</comment>
<comment type="similarity">
    <text evidence="5">Belongs to the GPC1 family.</text>
</comment>
<proteinExistence type="inferred from homology"/>
<feature type="chain" id="PRO_0000343219" description="Glycerophosphocholine acyltransferase 1">
    <location>
        <begin position="1"/>
        <end position="403"/>
    </location>
</feature>
<feature type="topological domain" description="Cytoplasmic" evidence="5">
    <location>
        <begin position="1"/>
        <end position="112"/>
    </location>
</feature>
<feature type="transmembrane region" description="Helical" evidence="2">
    <location>
        <begin position="113"/>
        <end position="133"/>
    </location>
</feature>
<feature type="topological domain" description="Lumenal" evidence="5">
    <location>
        <begin position="134"/>
        <end position="137"/>
    </location>
</feature>
<feature type="transmembrane region" description="Helical" evidence="2">
    <location>
        <begin position="138"/>
        <end position="155"/>
    </location>
</feature>
<feature type="topological domain" description="Cytoplasmic" evidence="5">
    <location>
        <begin position="156"/>
        <end position="161"/>
    </location>
</feature>
<feature type="transmembrane region" description="Helical" evidence="2">
    <location>
        <begin position="162"/>
        <end position="182"/>
    </location>
</feature>
<feature type="topological domain" description="Lumenal" evidence="5">
    <location>
        <begin position="183"/>
        <end position="186"/>
    </location>
</feature>
<feature type="transmembrane region" description="Helical" evidence="2">
    <location>
        <begin position="187"/>
        <end position="207"/>
    </location>
</feature>
<feature type="topological domain" description="Cytoplasmic" evidence="5">
    <location>
        <begin position="208"/>
        <end position="218"/>
    </location>
</feature>
<feature type="transmembrane region" description="Helical" evidence="2">
    <location>
        <begin position="219"/>
        <end position="239"/>
    </location>
</feature>
<feature type="topological domain" description="Lumenal" evidence="5">
    <location>
        <begin position="240"/>
        <end position="262"/>
    </location>
</feature>
<feature type="transmembrane region" description="Helical" evidence="2">
    <location>
        <begin position="263"/>
        <end position="283"/>
    </location>
</feature>
<feature type="topological domain" description="Cytoplasmic" evidence="5">
    <location>
        <begin position="284"/>
        <end position="322"/>
    </location>
</feature>
<feature type="transmembrane region" description="Helical" evidence="2">
    <location>
        <begin position="323"/>
        <end position="343"/>
    </location>
</feature>
<feature type="topological domain" description="Lumenal" evidence="5">
    <location>
        <begin position="344"/>
        <end position="352"/>
    </location>
</feature>
<feature type="transmembrane region" description="Helical" evidence="2">
    <location>
        <begin position="353"/>
        <end position="373"/>
    </location>
</feature>
<feature type="topological domain" description="Cytoplasmic" evidence="5">
    <location>
        <begin position="374"/>
        <end position="403"/>
    </location>
</feature>
<feature type="glycosylation site" description="N-linked (GlcNAc...) asparagine" evidence="3">
    <location>
        <position position="240"/>
    </location>
</feature>
<evidence type="ECO:0000250" key="1">
    <source>
        <dbReference type="UniProtKB" id="P48236"/>
    </source>
</evidence>
<evidence type="ECO:0000255" key="2"/>
<evidence type="ECO:0000255" key="3">
    <source>
        <dbReference type="PROSITE-ProRule" id="PRU00498"/>
    </source>
</evidence>
<evidence type="ECO:0000269" key="4">
    <source>
    </source>
</evidence>
<evidence type="ECO:0000305" key="5"/>
<keyword id="KW-0012">Acyltransferase</keyword>
<keyword id="KW-0256">Endoplasmic reticulum</keyword>
<keyword id="KW-0325">Glycoprotein</keyword>
<keyword id="KW-0333">Golgi apparatus</keyword>
<keyword id="KW-0444">Lipid biosynthesis</keyword>
<keyword id="KW-0443">Lipid metabolism</keyword>
<keyword id="KW-0472">Membrane</keyword>
<keyword id="KW-0594">Phospholipid biosynthesis</keyword>
<keyword id="KW-1208">Phospholipid metabolism</keyword>
<keyword id="KW-1185">Reference proteome</keyword>
<keyword id="KW-0808">Transferase</keyword>
<keyword id="KW-0812">Transmembrane</keyword>
<keyword id="KW-1133">Transmembrane helix</keyword>
<dbReference type="EC" id="2.3.1.-" evidence="1"/>
<dbReference type="EMBL" id="CU329671">
    <property type="protein sequence ID" value="CAA22878.2"/>
    <property type="molecule type" value="Genomic_DNA"/>
</dbReference>
<dbReference type="PIR" id="T40675">
    <property type="entry name" value="T40675"/>
</dbReference>
<dbReference type="RefSeq" id="NP_596320.2">
    <property type="nucleotide sequence ID" value="NM_001022242.2"/>
</dbReference>
<dbReference type="SMR" id="O94673"/>
<dbReference type="BioGRID" id="277694">
    <property type="interactions" value="5"/>
</dbReference>
<dbReference type="FunCoup" id="O94673">
    <property type="interactions" value="39"/>
</dbReference>
<dbReference type="STRING" id="284812.O94673"/>
<dbReference type="GlyCosmos" id="O94673">
    <property type="glycosylation" value="1 site, No reported glycans"/>
</dbReference>
<dbReference type="iPTMnet" id="O94673"/>
<dbReference type="PaxDb" id="4896-SPBC776.05.1"/>
<dbReference type="EnsemblFungi" id="SPBC776.05.1">
    <property type="protein sequence ID" value="SPBC776.05.1:pep"/>
    <property type="gene ID" value="SPBC776.05"/>
</dbReference>
<dbReference type="GeneID" id="2541180"/>
<dbReference type="KEGG" id="spo:2541180"/>
<dbReference type="PomBase" id="SPBC776.05">
    <property type="gene designation" value="gpc1"/>
</dbReference>
<dbReference type="VEuPathDB" id="FungiDB:SPBC776.05"/>
<dbReference type="eggNOG" id="KOG2895">
    <property type="taxonomic scope" value="Eukaryota"/>
</dbReference>
<dbReference type="HOGENOM" id="CLU_018994_1_2_1"/>
<dbReference type="InParanoid" id="O94673"/>
<dbReference type="OMA" id="WKRRVPT"/>
<dbReference type="PRO" id="PR:O94673"/>
<dbReference type="Proteomes" id="UP000002485">
    <property type="component" value="Chromosome II"/>
</dbReference>
<dbReference type="GO" id="GO:0005783">
    <property type="term" value="C:endoplasmic reticulum"/>
    <property type="evidence" value="ECO:0007005"/>
    <property type="project" value="PomBase"/>
</dbReference>
<dbReference type="GO" id="GO:0005789">
    <property type="term" value="C:endoplasmic reticulum membrane"/>
    <property type="evidence" value="ECO:0007669"/>
    <property type="project" value="UniProtKB-SubCell"/>
</dbReference>
<dbReference type="GO" id="GO:0005794">
    <property type="term" value="C:Golgi apparatus"/>
    <property type="evidence" value="ECO:0007005"/>
    <property type="project" value="PomBase"/>
</dbReference>
<dbReference type="GO" id="GO:0000139">
    <property type="term" value="C:Golgi membrane"/>
    <property type="evidence" value="ECO:0007669"/>
    <property type="project" value="UniProtKB-SubCell"/>
</dbReference>
<dbReference type="GO" id="GO:0016020">
    <property type="term" value="C:membrane"/>
    <property type="evidence" value="ECO:0000255"/>
    <property type="project" value="PomBase"/>
</dbReference>
<dbReference type="GO" id="GO:0106158">
    <property type="term" value="F:glycero-3-phosphocholine acyltransferase activity"/>
    <property type="evidence" value="ECO:0000266"/>
    <property type="project" value="PomBase"/>
</dbReference>
<dbReference type="GO" id="GO:0006656">
    <property type="term" value="P:phosphatidylcholine biosynthetic process"/>
    <property type="evidence" value="ECO:0000318"/>
    <property type="project" value="GO_Central"/>
</dbReference>
<dbReference type="InterPro" id="IPR021261">
    <property type="entry name" value="GPCAT"/>
</dbReference>
<dbReference type="PANTHER" id="PTHR31201:SF1">
    <property type="entry name" value="GLYCEROPHOSPHOCHOLINE ACYLTRANSFERASE 1"/>
    <property type="match status" value="1"/>
</dbReference>
<dbReference type="PANTHER" id="PTHR31201">
    <property type="entry name" value="OS01G0585100 PROTEIN"/>
    <property type="match status" value="1"/>
</dbReference>
<dbReference type="Pfam" id="PF10998">
    <property type="entry name" value="DUF2838"/>
    <property type="match status" value="1"/>
</dbReference>
<sequence>MDHLEFDENTDSEYSIFEEDNDYGLHGLDDSVGFTDLFDAPNIYRVYSWLHKHYNQKKGQLKHGVSRQKNKLQPIHKQINYETDKLKERLGKSIDKFQEQWNSGKVVRFRDKLSFALGVSTCILTALLVGMAPESMHLWYTIQLFVYLPLRYYTYQRKGYEYFIADFCYWGNILLLVYIWIFPESRRLFILSYSISYGTLAWSVVAWRNSLLFHSIDKITSLFIHFFPPLVLHTIVHLTNKSYLKDRFPAVLKVKKIDLLSSVEIASFFYALWQIWYYFFIQVGKQKQIQEGRPTSFTWLSKAYSKTKLGRAVAKLPQNLQPFVFMIIQYLYSITTMLPCSLWYNNKLYSTAFLALIFGWSVWNGASYYIDVFGRRFQKELEALRQQLAETPTNSGSSSALSR</sequence>